<keyword id="KW-0378">Hydrolase</keyword>
<keyword id="KW-0511">Multifunctional enzyme</keyword>
<keyword id="KW-0658">Purine biosynthesis</keyword>
<keyword id="KW-0808">Transferase</keyword>
<proteinExistence type="inferred from homology"/>
<comment type="catalytic activity">
    <reaction evidence="1">
        <text>(6R)-10-formyltetrahydrofolate + 5-amino-1-(5-phospho-beta-D-ribosyl)imidazole-4-carboxamide = 5-formamido-1-(5-phospho-D-ribosyl)imidazole-4-carboxamide + (6S)-5,6,7,8-tetrahydrofolate</text>
        <dbReference type="Rhea" id="RHEA:22192"/>
        <dbReference type="ChEBI" id="CHEBI:57453"/>
        <dbReference type="ChEBI" id="CHEBI:58467"/>
        <dbReference type="ChEBI" id="CHEBI:58475"/>
        <dbReference type="ChEBI" id="CHEBI:195366"/>
        <dbReference type="EC" id="2.1.2.3"/>
    </reaction>
</comment>
<comment type="catalytic activity">
    <reaction evidence="1">
        <text>IMP + H2O = 5-formamido-1-(5-phospho-D-ribosyl)imidazole-4-carboxamide</text>
        <dbReference type="Rhea" id="RHEA:18445"/>
        <dbReference type="ChEBI" id="CHEBI:15377"/>
        <dbReference type="ChEBI" id="CHEBI:58053"/>
        <dbReference type="ChEBI" id="CHEBI:58467"/>
        <dbReference type="EC" id="3.5.4.10"/>
    </reaction>
</comment>
<comment type="pathway">
    <text evidence="1">Purine metabolism; IMP biosynthesis via de novo pathway; 5-formamido-1-(5-phospho-D-ribosyl)imidazole-4-carboxamide from 5-amino-1-(5-phospho-D-ribosyl)imidazole-4-carboxamide (10-formyl THF route): step 1/1.</text>
</comment>
<comment type="pathway">
    <text evidence="1">Purine metabolism; IMP biosynthesis via de novo pathway; IMP from 5-formamido-1-(5-phospho-D-ribosyl)imidazole-4-carboxamide: step 1/1.</text>
</comment>
<comment type="domain">
    <text evidence="1">The IMP cyclohydrolase activity resides in the N-terminal region.</text>
</comment>
<comment type="similarity">
    <text evidence="1">Belongs to the PurH family.</text>
</comment>
<reference key="1">
    <citation type="journal article" date="2007" name="PLoS ONE">
        <title>A glimpse of streptococcal toxic shock syndrome from comparative genomics of S. suis 2 Chinese isolates.</title>
        <authorList>
            <person name="Chen C."/>
            <person name="Tang J."/>
            <person name="Dong W."/>
            <person name="Wang C."/>
            <person name="Feng Y."/>
            <person name="Wang J."/>
            <person name="Zheng F."/>
            <person name="Pan X."/>
            <person name="Liu D."/>
            <person name="Li M."/>
            <person name="Song Y."/>
            <person name="Zhu X."/>
            <person name="Sun H."/>
            <person name="Feng T."/>
            <person name="Guo Z."/>
            <person name="Ju A."/>
            <person name="Ge J."/>
            <person name="Dong Y."/>
            <person name="Sun W."/>
            <person name="Jiang Y."/>
            <person name="Wang J."/>
            <person name="Yan J."/>
            <person name="Yang H."/>
            <person name="Wang X."/>
            <person name="Gao G.F."/>
            <person name="Yang R."/>
            <person name="Wang J."/>
            <person name="Yu J."/>
        </authorList>
    </citation>
    <scope>NUCLEOTIDE SEQUENCE [LARGE SCALE GENOMIC DNA]</scope>
    <source>
        <strain>05ZYH33</strain>
    </source>
</reference>
<gene>
    <name evidence="1" type="primary">purH</name>
    <name type="ordered locus">SSU05_0032</name>
</gene>
<accession>A4VSB5</accession>
<dbReference type="EC" id="2.1.2.3" evidence="1"/>
<dbReference type="EC" id="3.5.4.10" evidence="1"/>
<dbReference type="EMBL" id="CP000407">
    <property type="protein sequence ID" value="ABP89004.1"/>
    <property type="molecule type" value="Genomic_DNA"/>
</dbReference>
<dbReference type="SMR" id="A4VSB5"/>
<dbReference type="STRING" id="391295.SSU05_0032"/>
<dbReference type="KEGG" id="ssu:SSU05_0032"/>
<dbReference type="eggNOG" id="COG0138">
    <property type="taxonomic scope" value="Bacteria"/>
</dbReference>
<dbReference type="HOGENOM" id="CLU_016316_5_2_9"/>
<dbReference type="UniPathway" id="UPA00074">
    <property type="reaction ID" value="UER00133"/>
</dbReference>
<dbReference type="UniPathway" id="UPA00074">
    <property type="reaction ID" value="UER00135"/>
</dbReference>
<dbReference type="GO" id="GO:0005829">
    <property type="term" value="C:cytosol"/>
    <property type="evidence" value="ECO:0007669"/>
    <property type="project" value="TreeGrafter"/>
</dbReference>
<dbReference type="GO" id="GO:0003937">
    <property type="term" value="F:IMP cyclohydrolase activity"/>
    <property type="evidence" value="ECO:0007669"/>
    <property type="project" value="UniProtKB-UniRule"/>
</dbReference>
<dbReference type="GO" id="GO:0004643">
    <property type="term" value="F:phosphoribosylaminoimidazolecarboxamide formyltransferase activity"/>
    <property type="evidence" value="ECO:0007669"/>
    <property type="project" value="UniProtKB-UniRule"/>
</dbReference>
<dbReference type="GO" id="GO:0006189">
    <property type="term" value="P:'de novo' IMP biosynthetic process"/>
    <property type="evidence" value="ECO:0007669"/>
    <property type="project" value="UniProtKB-UniRule"/>
</dbReference>
<dbReference type="CDD" id="cd01421">
    <property type="entry name" value="IMPCH"/>
    <property type="match status" value="1"/>
</dbReference>
<dbReference type="FunFam" id="3.40.140.20:FF:000001">
    <property type="entry name" value="Bifunctional purine biosynthesis protein PurH"/>
    <property type="match status" value="1"/>
</dbReference>
<dbReference type="FunFam" id="3.40.140.20:FF:000002">
    <property type="entry name" value="Bifunctional purine biosynthesis protein PurH"/>
    <property type="match status" value="1"/>
</dbReference>
<dbReference type="FunFam" id="3.40.50.1380:FF:000001">
    <property type="entry name" value="Bifunctional purine biosynthesis protein PurH"/>
    <property type="match status" value="1"/>
</dbReference>
<dbReference type="Gene3D" id="3.40.140.20">
    <property type="match status" value="2"/>
</dbReference>
<dbReference type="Gene3D" id="3.40.50.1380">
    <property type="entry name" value="Methylglyoxal synthase-like domain"/>
    <property type="match status" value="1"/>
</dbReference>
<dbReference type="HAMAP" id="MF_00139">
    <property type="entry name" value="PurH"/>
    <property type="match status" value="1"/>
</dbReference>
<dbReference type="InterPro" id="IPR024051">
    <property type="entry name" value="AICAR_Tfase_dup_dom_sf"/>
</dbReference>
<dbReference type="InterPro" id="IPR016193">
    <property type="entry name" value="Cytidine_deaminase-like"/>
</dbReference>
<dbReference type="InterPro" id="IPR011607">
    <property type="entry name" value="MGS-like_dom"/>
</dbReference>
<dbReference type="InterPro" id="IPR036914">
    <property type="entry name" value="MGS-like_dom_sf"/>
</dbReference>
<dbReference type="InterPro" id="IPR002695">
    <property type="entry name" value="PurH-like"/>
</dbReference>
<dbReference type="NCBIfam" id="NF002049">
    <property type="entry name" value="PRK00881.1"/>
    <property type="match status" value="1"/>
</dbReference>
<dbReference type="NCBIfam" id="TIGR00355">
    <property type="entry name" value="purH"/>
    <property type="match status" value="1"/>
</dbReference>
<dbReference type="PANTHER" id="PTHR11692:SF0">
    <property type="entry name" value="BIFUNCTIONAL PURINE BIOSYNTHESIS PROTEIN ATIC"/>
    <property type="match status" value="1"/>
</dbReference>
<dbReference type="PANTHER" id="PTHR11692">
    <property type="entry name" value="BIFUNCTIONAL PURINE BIOSYNTHESIS PROTEIN PURH"/>
    <property type="match status" value="1"/>
</dbReference>
<dbReference type="Pfam" id="PF01808">
    <property type="entry name" value="AICARFT_IMPCHas"/>
    <property type="match status" value="1"/>
</dbReference>
<dbReference type="Pfam" id="PF02142">
    <property type="entry name" value="MGS"/>
    <property type="match status" value="1"/>
</dbReference>
<dbReference type="PIRSF" id="PIRSF000414">
    <property type="entry name" value="AICARFT_IMPCHas"/>
    <property type="match status" value="1"/>
</dbReference>
<dbReference type="SMART" id="SM00798">
    <property type="entry name" value="AICARFT_IMPCHas"/>
    <property type="match status" value="1"/>
</dbReference>
<dbReference type="SMART" id="SM00851">
    <property type="entry name" value="MGS"/>
    <property type="match status" value="1"/>
</dbReference>
<dbReference type="SUPFAM" id="SSF53927">
    <property type="entry name" value="Cytidine deaminase-like"/>
    <property type="match status" value="1"/>
</dbReference>
<dbReference type="SUPFAM" id="SSF52335">
    <property type="entry name" value="Methylglyoxal synthase-like"/>
    <property type="match status" value="1"/>
</dbReference>
<dbReference type="PROSITE" id="PS51855">
    <property type="entry name" value="MGS"/>
    <property type="match status" value="1"/>
</dbReference>
<evidence type="ECO:0000255" key="1">
    <source>
        <dbReference type="HAMAP-Rule" id="MF_00139"/>
    </source>
</evidence>
<evidence type="ECO:0000255" key="2">
    <source>
        <dbReference type="PROSITE-ProRule" id="PRU01202"/>
    </source>
</evidence>
<feature type="chain" id="PRO_1000018974" description="Bifunctional purine biosynthesis protein PurH">
    <location>
        <begin position="1"/>
        <end position="515"/>
    </location>
</feature>
<feature type="domain" description="MGS-like" evidence="2">
    <location>
        <begin position="1"/>
        <end position="145"/>
    </location>
</feature>
<organism>
    <name type="scientific">Streptococcus suis (strain 05ZYH33)</name>
    <dbReference type="NCBI Taxonomy" id="391295"/>
    <lineage>
        <taxon>Bacteria</taxon>
        <taxon>Bacillati</taxon>
        <taxon>Bacillota</taxon>
        <taxon>Bacilli</taxon>
        <taxon>Lactobacillales</taxon>
        <taxon>Streptococcaceae</taxon>
        <taxon>Streptococcus</taxon>
    </lineage>
</organism>
<protein>
    <recommendedName>
        <fullName evidence="1">Bifunctional purine biosynthesis protein PurH</fullName>
    </recommendedName>
    <domain>
        <recommendedName>
            <fullName evidence="1">Phosphoribosylaminoimidazolecarboxamide formyltransferase</fullName>
            <ecNumber evidence="1">2.1.2.3</ecNumber>
        </recommendedName>
        <alternativeName>
            <fullName evidence="1">AICAR transformylase</fullName>
        </alternativeName>
    </domain>
    <domain>
        <recommendedName>
            <fullName evidence="1">IMP cyclohydrolase</fullName>
            <ecNumber evidence="1">3.5.4.10</ecNumber>
        </recommendedName>
        <alternativeName>
            <fullName evidence="1">ATIC</fullName>
        </alternativeName>
        <alternativeName>
            <fullName evidence="1">IMP synthase</fullName>
        </alternativeName>
        <alternativeName>
            <fullName evidence="1">Inosinicase</fullName>
        </alternativeName>
    </domain>
</protein>
<sequence length="515" mass="56504">MTKRALISVSDKNGIVEFAQELTKLGWEIISTGGTKVALDNAGVATIAIDDVTGFPEMMDGRVKTLHPNIHGGLLARRDVDSHLQAAKDHEIGLIDLVVVNLYPFKETILRPDVTYDLAVENIDIGGPSMLRSAAKNHASVTVVVDPADYPTVLGEIAEQGQTTYPTRQRLAAKVFRHTAAYDALIADYFTKQVGEDKPEKLTITYDLNQPMRYGENPQQNADFYQNALPTDYSIAAAKQLNGKELSFNNIRDADAAIRIIRDFKDRPTVVALKHMNPCGIGQAETIEKAWDYAYEADPVSIFGGIVVLNREVDAATAEKMHPIFLEIIIAPSYSAEALAILTNKKKNLRILELAFDAQDASEVEKEFTGVVGGLLVQDQDVVVESPADWQVVTERQPSEQEWAAMEFAWKSSKYVKSNGIIITNDKMTLGVGPGQTNRVASVRIAIEQAKDRLEGAVLASDAFFPFADNVEEIAAAGIKAIIQPGGSVRDQDSIDMANKYGLTMVFTGVRHFRH</sequence>
<name>PUR9_STRSY</name>